<evidence type="ECO:0000255" key="1">
    <source>
        <dbReference type="HAMAP-Rule" id="MF_00700"/>
    </source>
</evidence>
<dbReference type="EC" id="2.7.7.-" evidence="1"/>
<dbReference type="EMBL" id="CP000660">
    <property type="protein sequence ID" value="ABP51338.1"/>
    <property type="molecule type" value="Genomic_DNA"/>
</dbReference>
<dbReference type="SMR" id="A4WLS1"/>
<dbReference type="STRING" id="340102.Pars_1787"/>
<dbReference type="KEGG" id="pas:Pars_1787"/>
<dbReference type="HOGENOM" id="CLU_056123_0_0_2"/>
<dbReference type="OrthoDB" id="31125at2157"/>
<dbReference type="PhylomeDB" id="A4WLS1"/>
<dbReference type="Proteomes" id="UP000001567">
    <property type="component" value="Chromosome"/>
</dbReference>
<dbReference type="GO" id="GO:0000428">
    <property type="term" value="C:DNA-directed RNA polymerase complex"/>
    <property type="evidence" value="ECO:0007669"/>
    <property type="project" value="UniProtKB-KW"/>
</dbReference>
<dbReference type="GO" id="GO:1990077">
    <property type="term" value="C:primosome complex"/>
    <property type="evidence" value="ECO:0007669"/>
    <property type="project" value="UniProtKB-KW"/>
</dbReference>
<dbReference type="GO" id="GO:0003899">
    <property type="term" value="F:DNA-directed RNA polymerase activity"/>
    <property type="evidence" value="ECO:0007669"/>
    <property type="project" value="InterPro"/>
</dbReference>
<dbReference type="GO" id="GO:0046872">
    <property type="term" value="F:metal ion binding"/>
    <property type="evidence" value="ECO:0007669"/>
    <property type="project" value="UniProtKB-KW"/>
</dbReference>
<dbReference type="GO" id="GO:0006269">
    <property type="term" value="P:DNA replication, synthesis of primer"/>
    <property type="evidence" value="ECO:0007669"/>
    <property type="project" value="UniProtKB-UniRule"/>
</dbReference>
<dbReference type="CDD" id="cd04860">
    <property type="entry name" value="AE_Prim_S"/>
    <property type="match status" value="1"/>
</dbReference>
<dbReference type="Gene3D" id="3.90.920.10">
    <property type="entry name" value="DNA primase, PRIM domain"/>
    <property type="match status" value="1"/>
</dbReference>
<dbReference type="HAMAP" id="MF_00700">
    <property type="entry name" value="DNA_primase_sml_arc"/>
    <property type="match status" value="1"/>
</dbReference>
<dbReference type="InterPro" id="IPR002755">
    <property type="entry name" value="DNA_primase_S"/>
</dbReference>
<dbReference type="InterPro" id="IPR014052">
    <property type="entry name" value="DNA_primase_ssu_euk/arc"/>
</dbReference>
<dbReference type="InterPro" id="IPR023639">
    <property type="entry name" value="DNA_primase_ssu_PriS"/>
</dbReference>
<dbReference type="NCBIfam" id="TIGR00335">
    <property type="entry name" value="primase_sml"/>
    <property type="match status" value="1"/>
</dbReference>
<dbReference type="PANTHER" id="PTHR10536">
    <property type="entry name" value="DNA PRIMASE SMALL SUBUNIT"/>
    <property type="match status" value="1"/>
</dbReference>
<dbReference type="Pfam" id="PF01896">
    <property type="entry name" value="DNA_primase_S"/>
    <property type="match status" value="1"/>
</dbReference>
<dbReference type="SUPFAM" id="SSF56747">
    <property type="entry name" value="Prim-pol domain"/>
    <property type="match status" value="1"/>
</dbReference>
<comment type="function">
    <text evidence="1">Catalytic subunit of DNA primase, an RNA polymerase that catalyzes the synthesis of short RNA molecules used as primers for DNA polymerase during DNA replication. The small subunit contains the primase catalytic core and has DNA synthesis activity on its own. Binding to the large subunit stabilizes and modulates the activity, increasing the rate of DNA synthesis while decreasing the length of the DNA fragments, and conferring RNA synthesis capability. The DNA polymerase activity may enable DNA primase to also catalyze primer extension after primer synthesis. May also play a role in DNA repair.</text>
</comment>
<comment type="cofactor">
    <cofactor evidence="1">
        <name>Mg(2+)</name>
        <dbReference type="ChEBI" id="CHEBI:18420"/>
    </cofactor>
    <cofactor evidence="1">
        <name>Mn(2+)</name>
        <dbReference type="ChEBI" id="CHEBI:29035"/>
    </cofactor>
</comment>
<comment type="subunit">
    <text evidence="1">Heterodimer of a small subunit (PriS) and a large subunit (PriL).</text>
</comment>
<comment type="similarity">
    <text evidence="1">Belongs to the eukaryotic-type primase small subunit family.</text>
</comment>
<accession>A4WLS1</accession>
<proteinExistence type="inferred from homology"/>
<sequence length="312" mass="36064">MITEVFFRNFYRNYAKFDVVSVERREFAFQPFGGGMVRHKSFNSVDELRRYIVEKTPKHIYHSVAYYERPGEEDMDRKGWLGADLVFDIDGDHLNTEACKGSAVVSLRCLEDAKEETNKLIDILVRELDLRPTRIVFSGNRGFHIHITSEEVLKLGTKERREVVNFIKGVGFDPSRFEVKLGRRRVKLYEEEPVGSLLRVRQAVENPDTLRVEIDEVVTQDIHRLIRLPGSLNGKTGLVAMPLELKDLERGVENIVERAIAFRKGNLKFRFEKPLIGEVLFEKIEARAGDLKILPAHVAIYLELQEFGKIYD</sequence>
<gene>
    <name evidence="1" type="primary">priS</name>
    <name type="synonym">priA</name>
    <name type="ordered locus">Pars_1787</name>
</gene>
<feature type="chain" id="PRO_1000045509" description="DNA primase small subunit PriS">
    <location>
        <begin position="1"/>
        <end position="312"/>
    </location>
</feature>
<feature type="active site" evidence="1">
    <location>
        <position position="88"/>
    </location>
</feature>
<feature type="active site" evidence="1">
    <location>
        <position position="90"/>
    </location>
</feature>
<feature type="active site" evidence="1">
    <location>
        <position position="215"/>
    </location>
</feature>
<name>PRIS_PYRAR</name>
<protein>
    <recommendedName>
        <fullName evidence="1">DNA primase small subunit PriS</fullName>
        <ecNumber evidence="1">2.7.7.-</ecNumber>
    </recommendedName>
</protein>
<organism>
    <name type="scientific">Pyrobaculum arsenaticum (strain DSM 13514 / JCM 11321 / PZ6)</name>
    <dbReference type="NCBI Taxonomy" id="340102"/>
    <lineage>
        <taxon>Archaea</taxon>
        <taxon>Thermoproteota</taxon>
        <taxon>Thermoprotei</taxon>
        <taxon>Thermoproteales</taxon>
        <taxon>Thermoproteaceae</taxon>
        <taxon>Pyrobaculum</taxon>
    </lineage>
</organism>
<keyword id="KW-0235">DNA replication</keyword>
<keyword id="KW-0240">DNA-directed RNA polymerase</keyword>
<keyword id="KW-0460">Magnesium</keyword>
<keyword id="KW-0464">Manganese</keyword>
<keyword id="KW-0479">Metal-binding</keyword>
<keyword id="KW-0548">Nucleotidyltransferase</keyword>
<keyword id="KW-0639">Primosome</keyword>
<keyword id="KW-0804">Transcription</keyword>
<keyword id="KW-0808">Transferase</keyword>
<reference key="1">
    <citation type="submission" date="2007-04" db="EMBL/GenBank/DDBJ databases">
        <title>Complete sequence of Pyrobaculum arsenaticum DSM 13514.</title>
        <authorList>
            <consortium name="US DOE Joint Genome Institute"/>
            <person name="Copeland A."/>
            <person name="Lucas S."/>
            <person name="Lapidus A."/>
            <person name="Barry K."/>
            <person name="Glavina del Rio T."/>
            <person name="Dalin E."/>
            <person name="Tice H."/>
            <person name="Pitluck S."/>
            <person name="Chain P."/>
            <person name="Malfatti S."/>
            <person name="Shin M."/>
            <person name="Vergez L."/>
            <person name="Schmutz J."/>
            <person name="Larimer F."/>
            <person name="Land M."/>
            <person name="Hauser L."/>
            <person name="Kyrpides N."/>
            <person name="Mikhailova N."/>
            <person name="Cozen A.E."/>
            <person name="Fitz-Gibbon S.T."/>
            <person name="House C.H."/>
            <person name="Saltikov C."/>
            <person name="Lowe T.M."/>
            <person name="Richardson P."/>
        </authorList>
    </citation>
    <scope>NUCLEOTIDE SEQUENCE [LARGE SCALE GENOMIC DNA]</scope>
    <source>
        <strain>ATCC 700994 / DSM 13514 / JCM 11321 / PZ6</strain>
    </source>
</reference>